<sequence length="148" mass="16537">MKALIVLGLVLLSVTVQGKVFERCELARTLKRLGMDGYRGISLANWMCLAKWESGYNTRATNYNAGDRSTDYGIFQINSRYWCNDGKTPGAVNACHLSCSALLQDNIADAVACAKRVVRDPQGIRAWVAWRNRCQNRDVRQYVQGCGV</sequence>
<reference key="1">
    <citation type="journal article" date="1997" name="Nature">
        <title>Episodic adaptive evolution of primate lysozymes.</title>
        <authorList>
            <person name="Messier W."/>
            <person name="Stewart C.B."/>
        </authorList>
    </citation>
    <scope>NUCLEOTIDE SEQUENCE [MRNA]</scope>
    <source>
        <tissue>Blood</tissue>
    </source>
</reference>
<protein>
    <recommendedName>
        <fullName>Lysozyme C</fullName>
        <ecNumber>3.2.1.17</ecNumber>
    </recommendedName>
    <alternativeName>
        <fullName>1,4-beta-N-acetylmuramidase C</fullName>
    </alternativeName>
</protein>
<comment type="function">
    <text>Lysozymes have primarily a bacteriolytic function; those in tissues and body fluids are associated with the monocyte-macrophage system and enhance the activity of immunoagents.</text>
</comment>
<comment type="catalytic activity">
    <reaction>
        <text>Hydrolysis of (1-&gt;4)-beta-linkages between N-acetylmuramic acid and N-acetyl-D-glucosamine residues in a peptidoglycan and between N-acetyl-D-glucosamine residues in chitodextrins.</text>
        <dbReference type="EC" id="3.2.1.17"/>
    </reaction>
</comment>
<comment type="subunit">
    <text evidence="1">Monomer.</text>
</comment>
<comment type="subcellular location">
    <subcellularLocation>
        <location evidence="1">Secreted</location>
    </subcellularLocation>
</comment>
<comment type="miscellaneous">
    <text>Lysozyme C is capable of both hydrolysis and transglycosylation; it also shows a slight esterase activity. It acts rapidly on both peptide-substituted and unsubstituted peptidoglycan, and slowly on chitin oligosaccharides.</text>
</comment>
<comment type="similarity">
    <text evidence="2">Belongs to the glycosyl hydrolase 22 family.</text>
</comment>
<dbReference type="EC" id="3.2.1.17"/>
<dbReference type="EMBL" id="U76912">
    <property type="protein sequence ID" value="AAB41209.1"/>
    <property type="molecule type" value="mRNA"/>
</dbReference>
<dbReference type="RefSeq" id="NP_001009073.1">
    <property type="nucleotide sequence ID" value="NM_001009073.1"/>
</dbReference>
<dbReference type="BMRB" id="P61628"/>
<dbReference type="SMR" id="P61628"/>
<dbReference type="FunCoup" id="P61628">
    <property type="interactions" value="94"/>
</dbReference>
<dbReference type="STRING" id="9598.ENSPTRP00000050073"/>
<dbReference type="CAZy" id="GH22">
    <property type="family name" value="Glycoside Hydrolase Family 22"/>
</dbReference>
<dbReference type="PaxDb" id="9598-ENSPTRP00000050073"/>
<dbReference type="Ensembl" id="ENSPTRT00000057224.3">
    <property type="protein sequence ID" value="ENSPTRP00000050073.3"/>
    <property type="gene ID" value="ENSPTRG00000029654.3"/>
</dbReference>
<dbReference type="GeneID" id="450190"/>
<dbReference type="KEGG" id="ptr:450190"/>
<dbReference type="CTD" id="4069"/>
<dbReference type="VGNC" id="VGNC:5465">
    <property type="gene designation" value="LYZ"/>
</dbReference>
<dbReference type="eggNOG" id="ENOG502S1S1">
    <property type="taxonomic scope" value="Eukaryota"/>
</dbReference>
<dbReference type="GeneTree" id="ENSGT00940000153832"/>
<dbReference type="InParanoid" id="P61628"/>
<dbReference type="OMA" id="VYERCEF"/>
<dbReference type="OrthoDB" id="742at9604"/>
<dbReference type="Proteomes" id="UP000002277">
    <property type="component" value="Chromosome 12"/>
</dbReference>
<dbReference type="Bgee" id="ENSPTRG00000029654">
    <property type="expression patterns" value="Expressed in bone marrow and 20 other cell types or tissues"/>
</dbReference>
<dbReference type="GO" id="GO:0005615">
    <property type="term" value="C:extracellular space"/>
    <property type="evidence" value="ECO:0007669"/>
    <property type="project" value="Ensembl"/>
</dbReference>
<dbReference type="GO" id="GO:0042802">
    <property type="term" value="F:identical protein binding"/>
    <property type="evidence" value="ECO:0007669"/>
    <property type="project" value="Ensembl"/>
</dbReference>
<dbReference type="GO" id="GO:0003796">
    <property type="term" value="F:lysozyme activity"/>
    <property type="evidence" value="ECO:0000318"/>
    <property type="project" value="GO_Central"/>
</dbReference>
<dbReference type="GO" id="GO:0050829">
    <property type="term" value="P:defense response to Gram-negative bacterium"/>
    <property type="evidence" value="ECO:0000318"/>
    <property type="project" value="GO_Central"/>
</dbReference>
<dbReference type="GO" id="GO:0050830">
    <property type="term" value="P:defense response to Gram-positive bacterium"/>
    <property type="evidence" value="ECO:0000318"/>
    <property type="project" value="GO_Central"/>
</dbReference>
<dbReference type="GO" id="GO:0031640">
    <property type="term" value="P:killing of cells of another organism"/>
    <property type="evidence" value="ECO:0007669"/>
    <property type="project" value="UniProtKB-KW"/>
</dbReference>
<dbReference type="CDD" id="cd16897">
    <property type="entry name" value="LYZ_C"/>
    <property type="match status" value="1"/>
</dbReference>
<dbReference type="FunFam" id="1.10.530.10:FF:000001">
    <property type="entry name" value="Lysozyme C"/>
    <property type="match status" value="1"/>
</dbReference>
<dbReference type="Gene3D" id="1.10.530.10">
    <property type="match status" value="1"/>
</dbReference>
<dbReference type="InterPro" id="IPR001916">
    <property type="entry name" value="Glyco_hydro_22"/>
</dbReference>
<dbReference type="InterPro" id="IPR019799">
    <property type="entry name" value="Glyco_hydro_22_CS"/>
</dbReference>
<dbReference type="InterPro" id="IPR000974">
    <property type="entry name" value="Glyco_hydro_22_lys"/>
</dbReference>
<dbReference type="InterPro" id="IPR023346">
    <property type="entry name" value="Lysozyme-like_dom_sf"/>
</dbReference>
<dbReference type="PANTHER" id="PTHR11407">
    <property type="entry name" value="LYSOZYME C"/>
    <property type="match status" value="1"/>
</dbReference>
<dbReference type="PANTHER" id="PTHR11407:SF28">
    <property type="entry name" value="LYSOZYME C"/>
    <property type="match status" value="1"/>
</dbReference>
<dbReference type="Pfam" id="PF00062">
    <property type="entry name" value="Lys"/>
    <property type="match status" value="1"/>
</dbReference>
<dbReference type="PRINTS" id="PR00137">
    <property type="entry name" value="LYSOZYME"/>
</dbReference>
<dbReference type="PRINTS" id="PR00135">
    <property type="entry name" value="LYZLACT"/>
</dbReference>
<dbReference type="SMART" id="SM00263">
    <property type="entry name" value="LYZ1"/>
    <property type="match status" value="1"/>
</dbReference>
<dbReference type="SUPFAM" id="SSF53955">
    <property type="entry name" value="Lysozyme-like"/>
    <property type="match status" value="1"/>
</dbReference>
<dbReference type="PROSITE" id="PS00128">
    <property type="entry name" value="GLYCOSYL_HYDROL_F22_1"/>
    <property type="match status" value="1"/>
</dbReference>
<dbReference type="PROSITE" id="PS51348">
    <property type="entry name" value="GLYCOSYL_HYDROL_F22_2"/>
    <property type="match status" value="1"/>
</dbReference>
<feature type="signal peptide" evidence="1">
    <location>
        <begin position="1"/>
        <end position="18"/>
    </location>
</feature>
<feature type="chain" id="PRO_0000018476" description="Lysozyme C">
    <location>
        <begin position="19"/>
        <end position="148"/>
    </location>
</feature>
<feature type="domain" description="C-type lysozyme" evidence="2">
    <location>
        <begin position="19"/>
        <end position="148"/>
    </location>
</feature>
<feature type="active site" evidence="2">
    <location>
        <position position="53"/>
    </location>
</feature>
<feature type="active site" evidence="2">
    <location>
        <position position="71"/>
    </location>
</feature>
<feature type="disulfide bond" evidence="2">
    <location>
        <begin position="24"/>
        <end position="146"/>
    </location>
</feature>
<feature type="disulfide bond" evidence="2">
    <location>
        <begin position="48"/>
        <end position="134"/>
    </location>
</feature>
<feature type="disulfide bond" evidence="2">
    <location>
        <begin position="83"/>
        <end position="99"/>
    </location>
</feature>
<feature type="disulfide bond" evidence="2">
    <location>
        <begin position="95"/>
        <end position="113"/>
    </location>
</feature>
<organism>
    <name type="scientific">Pan troglodytes</name>
    <name type="common">Chimpanzee</name>
    <dbReference type="NCBI Taxonomy" id="9598"/>
    <lineage>
        <taxon>Eukaryota</taxon>
        <taxon>Metazoa</taxon>
        <taxon>Chordata</taxon>
        <taxon>Craniata</taxon>
        <taxon>Vertebrata</taxon>
        <taxon>Euteleostomi</taxon>
        <taxon>Mammalia</taxon>
        <taxon>Eutheria</taxon>
        <taxon>Euarchontoglires</taxon>
        <taxon>Primates</taxon>
        <taxon>Haplorrhini</taxon>
        <taxon>Catarrhini</taxon>
        <taxon>Hominidae</taxon>
        <taxon>Pan</taxon>
    </lineage>
</organism>
<accession>P61628</accession>
<accession>P00695</accession>
<accession>Q13170</accession>
<accession>Q9UCF8</accession>
<name>LYSC_PANTR</name>
<proteinExistence type="evidence at transcript level"/>
<gene>
    <name type="primary">LYZ</name>
    <name type="synonym">LZM</name>
</gene>
<keyword id="KW-0929">Antimicrobial</keyword>
<keyword id="KW-0081">Bacteriolytic enzyme</keyword>
<keyword id="KW-1015">Disulfide bond</keyword>
<keyword id="KW-0326">Glycosidase</keyword>
<keyword id="KW-0378">Hydrolase</keyword>
<keyword id="KW-1185">Reference proteome</keyword>
<keyword id="KW-0964">Secreted</keyword>
<keyword id="KW-0732">Signal</keyword>
<evidence type="ECO:0000250" key="1"/>
<evidence type="ECO:0000255" key="2">
    <source>
        <dbReference type="PROSITE-ProRule" id="PRU00680"/>
    </source>
</evidence>